<evidence type="ECO:0000250" key="1"/>
<evidence type="ECO:0000250" key="2">
    <source>
        <dbReference type="UniProtKB" id="P29022"/>
    </source>
</evidence>
<evidence type="ECO:0000305" key="3"/>
<reference key="1">
    <citation type="journal article" date="1994" name="Mol. Gen. Genet.">
        <title>Isolation of an osmotic stress- and abscisic acid-induced gene encoding an acidic endochitinase from Lycopersicon chilense.</title>
        <authorList>
            <person name="Chen R.D."/>
            <person name="Yu L.X."/>
            <person name="Greer A.F."/>
            <person name="Cheriti H."/>
            <person name="Tabaeizadeh Z."/>
        </authorList>
    </citation>
    <scope>NUCLEOTIDE SEQUENCE [MRNA]</scope>
    <source>
        <strain>cv. LA1930</strain>
        <tissue>Leaf</tissue>
    </source>
</reference>
<organism>
    <name type="scientific">Solanum chilense</name>
    <name type="common">Tomato</name>
    <name type="synonym">Lycopersicon chilense</name>
    <dbReference type="NCBI Taxonomy" id="4083"/>
    <lineage>
        <taxon>Eukaryota</taxon>
        <taxon>Viridiplantae</taxon>
        <taxon>Streptophyta</taxon>
        <taxon>Embryophyta</taxon>
        <taxon>Tracheophyta</taxon>
        <taxon>Spermatophyta</taxon>
        <taxon>Magnoliopsida</taxon>
        <taxon>eudicotyledons</taxon>
        <taxon>Gunneridae</taxon>
        <taxon>Pentapetalae</taxon>
        <taxon>asterids</taxon>
        <taxon>lamiids</taxon>
        <taxon>Solanales</taxon>
        <taxon>Solanaceae</taxon>
        <taxon>Solanoideae</taxon>
        <taxon>Solaneae</taxon>
        <taxon>Solanum</taxon>
        <taxon>Solanum subgen. Lycopersicon</taxon>
    </lineage>
</organism>
<comment type="function">
    <text>Defense against chitin-containing fungal pathogens.</text>
</comment>
<comment type="catalytic activity">
    <reaction>
        <text>Random endo-hydrolysis of N-acetyl-beta-D-glucosaminide (1-&gt;4)-beta-linkages in chitin and chitodextrins.</text>
        <dbReference type="EC" id="3.2.1.14"/>
    </reaction>
</comment>
<comment type="subcellular location">
    <subcellularLocation>
        <location>Secreted</location>
        <location>Extracellular space</location>
    </subcellularLocation>
</comment>
<comment type="induction">
    <text>By osmotic stress and abscisic acid (ABA).</text>
</comment>
<comment type="similarity">
    <text evidence="3">Belongs to the glycosyl hydrolase 19 family. Chitinase class II subfamily.</text>
</comment>
<proteinExistence type="evidence at transcript level"/>
<accession>Q40114</accession>
<accession>Q40113</accession>
<sequence length="253" mass="27569">MKFNIVSPVALSCLFFLFLTGTLAQNAGSIVTRELFEQMLSFRNNDACPAKGFYTYDAFIAAANSFPGFGTTGDDTARKKEIAAFFGQTSHETKGGSAGTFTGGYCFVRQIDQSDRYYGRGPIQLTHQSNYERAGQGIGVGQDLVNNPDLVATDPIISFRTAIWFWMTAQDNKPSCHNVIIGQWTPSPADTAANRVPGYGVITNIINGGLECNMGPNTAVESRIGFYRRYCGMLNVPTGENLDCNNQKNFAQG</sequence>
<dbReference type="EC" id="3.2.1.14"/>
<dbReference type="EMBL" id="L19342">
    <property type="protein sequence ID" value="AAA64999.1"/>
    <property type="molecule type" value="mRNA"/>
</dbReference>
<dbReference type="EMBL" id="M97210">
    <property type="protein sequence ID" value="AAA64998.1"/>
    <property type="molecule type" value="mRNA"/>
</dbReference>
<dbReference type="PIR" id="S51588">
    <property type="entry name" value="S51588"/>
</dbReference>
<dbReference type="PIR" id="S51589">
    <property type="entry name" value="S51589"/>
</dbReference>
<dbReference type="SMR" id="Q40114"/>
<dbReference type="CAZy" id="GH19">
    <property type="family name" value="Glycoside Hydrolase Family 19"/>
</dbReference>
<dbReference type="GO" id="GO:0005576">
    <property type="term" value="C:extracellular region"/>
    <property type="evidence" value="ECO:0007669"/>
    <property type="project" value="UniProtKB-SubCell"/>
</dbReference>
<dbReference type="GO" id="GO:0008843">
    <property type="term" value="F:endochitinase activity"/>
    <property type="evidence" value="ECO:0007669"/>
    <property type="project" value="UniProtKB-EC"/>
</dbReference>
<dbReference type="GO" id="GO:0016998">
    <property type="term" value="P:cell wall macromolecule catabolic process"/>
    <property type="evidence" value="ECO:0007669"/>
    <property type="project" value="InterPro"/>
</dbReference>
<dbReference type="GO" id="GO:0006032">
    <property type="term" value="P:chitin catabolic process"/>
    <property type="evidence" value="ECO:0007669"/>
    <property type="project" value="UniProtKB-KW"/>
</dbReference>
<dbReference type="GO" id="GO:0050832">
    <property type="term" value="P:defense response to fungus"/>
    <property type="evidence" value="ECO:0007669"/>
    <property type="project" value="TreeGrafter"/>
</dbReference>
<dbReference type="GO" id="GO:0000272">
    <property type="term" value="P:polysaccharide catabolic process"/>
    <property type="evidence" value="ECO:0007669"/>
    <property type="project" value="UniProtKB-KW"/>
</dbReference>
<dbReference type="CDD" id="cd00325">
    <property type="entry name" value="chitinase_GH19"/>
    <property type="match status" value="1"/>
</dbReference>
<dbReference type="FunFam" id="3.30.20.10:FF:000002">
    <property type="entry name" value="Acidic endochitinase pcht28"/>
    <property type="match status" value="1"/>
</dbReference>
<dbReference type="Gene3D" id="1.10.530.10">
    <property type="match status" value="1"/>
</dbReference>
<dbReference type="Gene3D" id="3.30.20.10">
    <property type="entry name" value="Endochitinase, domain 2"/>
    <property type="match status" value="1"/>
</dbReference>
<dbReference type="InterPro" id="IPR016283">
    <property type="entry name" value="Glyco_hydro_19"/>
</dbReference>
<dbReference type="InterPro" id="IPR000726">
    <property type="entry name" value="Glyco_hydro_19_cat"/>
</dbReference>
<dbReference type="InterPro" id="IPR023346">
    <property type="entry name" value="Lysozyme-like_dom_sf"/>
</dbReference>
<dbReference type="PANTHER" id="PTHR22595:SF159">
    <property type="entry name" value="ACIDIC 26 KDA ENDOCHITINASE"/>
    <property type="match status" value="1"/>
</dbReference>
<dbReference type="PANTHER" id="PTHR22595">
    <property type="entry name" value="CHITINASE-RELATED"/>
    <property type="match status" value="1"/>
</dbReference>
<dbReference type="Pfam" id="PF00182">
    <property type="entry name" value="Glyco_hydro_19"/>
    <property type="match status" value="1"/>
</dbReference>
<dbReference type="PIRSF" id="PIRSF001060">
    <property type="entry name" value="Endochitinase"/>
    <property type="match status" value="1"/>
</dbReference>
<dbReference type="SUPFAM" id="SSF53955">
    <property type="entry name" value="Lysozyme-like"/>
    <property type="match status" value="1"/>
</dbReference>
<dbReference type="PROSITE" id="PS00773">
    <property type="entry name" value="CHITINASE_19_1"/>
    <property type="match status" value="1"/>
</dbReference>
<dbReference type="PROSITE" id="PS00774">
    <property type="entry name" value="CHITINASE_19_2"/>
    <property type="match status" value="1"/>
</dbReference>
<protein>
    <recommendedName>
        <fullName>Acidic endochitinase pcht28</fullName>
        <ecNumber>3.2.1.14</ecNumber>
    </recommendedName>
</protein>
<name>CHIA_SOLCI</name>
<keyword id="KW-0119">Carbohydrate metabolism</keyword>
<keyword id="KW-0146">Chitin degradation</keyword>
<keyword id="KW-1015">Disulfide bond</keyword>
<keyword id="KW-0326">Glycosidase</keyword>
<keyword id="KW-0378">Hydrolase</keyword>
<keyword id="KW-0611">Plant defense</keyword>
<keyword id="KW-0624">Polysaccharide degradation</keyword>
<keyword id="KW-0964">Secreted</keyword>
<keyword id="KW-0732">Signal</keyword>
<keyword id="KW-0346">Stress response</keyword>
<feature type="signal peptide" evidence="1">
    <location>
        <begin position="1"/>
        <end position="24"/>
    </location>
</feature>
<feature type="chain" id="PRO_0000005298" description="Acidic endochitinase pcht28">
    <location>
        <begin position="25"/>
        <end position="253"/>
    </location>
</feature>
<feature type="active site" description="Proton donor" evidence="2">
    <location>
        <position position="92"/>
    </location>
</feature>
<feature type="disulfide bond" evidence="1">
    <location>
        <begin position="212"/>
        <end position="244"/>
    </location>
</feature>
<feature type="sequence conflict" description="In Ref. 1; AAA64998." evidence="3" ref="1">
    <original>K</original>
    <variation>N</variation>
    <location>
        <position position="94"/>
    </location>
</feature>
<feature type="sequence conflict" description="In Ref. 1; AAA64998." evidence="3" ref="1">
    <original>R</original>
    <variation>K</variation>
    <location>
        <position position="160"/>
    </location>
</feature>
<feature type="sequence conflict" description="In Ref. 1; AAA64998." evidence="3" ref="1">
    <original>QD</original>
    <variation>HH</variation>
    <location>
        <begin position="170"/>
        <end position="171"/>
    </location>
</feature>